<evidence type="ECO:0000269" key="1">
    <source>
    </source>
</evidence>
<evidence type="ECO:0000305" key="2"/>
<evidence type="ECO:0000312" key="3">
    <source>
        <dbReference type="EMBL" id="CCP46087.1"/>
    </source>
</evidence>
<evidence type="ECO:0007744" key="4">
    <source>
    </source>
</evidence>
<organism>
    <name type="scientific">Mycobacterium tuberculosis (strain ATCC 25618 / H37Rv)</name>
    <dbReference type="NCBI Taxonomy" id="83332"/>
    <lineage>
        <taxon>Bacteria</taxon>
        <taxon>Bacillati</taxon>
        <taxon>Actinomycetota</taxon>
        <taxon>Actinomycetes</taxon>
        <taxon>Mycobacteriales</taxon>
        <taxon>Mycobacteriaceae</taxon>
        <taxon>Mycobacterium</taxon>
        <taxon>Mycobacterium tuberculosis complex</taxon>
    </lineage>
</organism>
<feature type="initiator methionine" description="Removed" evidence="1">
    <location>
        <position position="1"/>
    </location>
</feature>
<feature type="chain" id="PRO_0000457299" description="TIGR03089 family protein">
    <location>
        <begin position="2"/>
        <end position="243"/>
    </location>
</feature>
<comment type="similarity">
    <text evidence="2">Belongs to the TIGR03089 family.</text>
</comment>
<comment type="caution">
    <text evidence="1">The start codon for this sequence is CTG, which is very rare.</text>
</comment>
<comment type="sequence caution" evidence="1">
    <conflict type="erroneous initiation">
        <sequence resource="EMBL-CDS" id="CCP46087"/>
    </conflict>
    <text>Truncated N-terminus.</text>
</comment>
<reference evidence="3" key="1">
    <citation type="journal article" date="1998" name="Nature">
        <title>Deciphering the biology of Mycobacterium tuberculosis from the complete genome sequence.</title>
        <authorList>
            <person name="Cole S.T."/>
            <person name="Brosch R."/>
            <person name="Parkhill J."/>
            <person name="Garnier T."/>
            <person name="Churcher C.M."/>
            <person name="Harris D.E."/>
            <person name="Gordon S.V."/>
            <person name="Eiglmeier K."/>
            <person name="Gas S."/>
            <person name="Barry C.E. III"/>
            <person name="Tekaia F."/>
            <person name="Badcock K."/>
            <person name="Basham D."/>
            <person name="Brown D."/>
            <person name="Chillingworth T."/>
            <person name="Connor R."/>
            <person name="Davies R.M."/>
            <person name="Devlin K."/>
            <person name="Feltwell T."/>
            <person name="Gentles S."/>
            <person name="Hamlin N."/>
            <person name="Holroyd S."/>
            <person name="Hornsby T."/>
            <person name="Jagels K."/>
            <person name="Krogh A."/>
            <person name="McLean J."/>
            <person name="Moule S."/>
            <person name="Murphy L.D."/>
            <person name="Oliver S."/>
            <person name="Osborne J."/>
            <person name="Quail M.A."/>
            <person name="Rajandream M.A."/>
            <person name="Rogers J."/>
            <person name="Rutter S."/>
            <person name="Seeger K."/>
            <person name="Skelton S."/>
            <person name="Squares S."/>
            <person name="Squares R."/>
            <person name="Sulston J.E."/>
            <person name="Taylor K."/>
            <person name="Whitehead S."/>
            <person name="Barrell B.G."/>
        </authorList>
    </citation>
    <scope>NUCLEOTIDE SEQUENCE [LARGE SCALE GENOMIC DNA]</scope>
    <source>
        <strain>ATCC 25618 / H37Rv</strain>
    </source>
</reference>
<reference key="2">
    <citation type="journal article" date="2022" name="Genomics">
        <title>Deep N-terminomics of Mycobacterium tuberculosis H37Rv extensively correct annotated encoding genes.</title>
        <authorList>
            <person name="Shi J."/>
            <person name="Meng S."/>
            <person name="Wan L."/>
            <person name="Zhang Z."/>
            <person name="Jiang S."/>
            <person name="Zhu H."/>
            <person name="Dai E."/>
            <person name="Chang L."/>
            <person name="Gao H."/>
            <person name="Wan K."/>
            <person name="Zhang L."/>
            <person name="Zhao X."/>
            <person name="Liu H."/>
            <person name="Lyu Z."/>
            <person name="Zhang Y."/>
            <person name="Xu P."/>
        </authorList>
    </citation>
    <scope>PROTEIN SEQUENCE OF 2-17</scope>
    <scope>SEQUENCE REVISION TO N-TERMINUS</scope>
    <source>
        <strain>H37Rv</strain>
    </source>
</reference>
<reference evidence="4" key="3">
    <citation type="journal article" date="2011" name="Mol. Cell. Proteomics">
        <title>Proteogenomic analysis of Mycobacterium tuberculosis by high resolution mass spectrometry.</title>
        <authorList>
            <person name="Kelkar D.S."/>
            <person name="Kumar D."/>
            <person name="Kumar P."/>
            <person name="Balakrishnan L."/>
            <person name="Muthusamy B."/>
            <person name="Yadav A.K."/>
            <person name="Shrivastava P."/>
            <person name="Marimuthu A."/>
            <person name="Anand S."/>
            <person name="Sundaram H."/>
            <person name="Kingsbury R."/>
            <person name="Harsha H.C."/>
            <person name="Nair B."/>
            <person name="Prasad T.S."/>
            <person name="Chauhan D.S."/>
            <person name="Katoch K."/>
            <person name="Katoch V.M."/>
            <person name="Kumar P."/>
            <person name="Chaerkady R."/>
            <person name="Ramachandran S."/>
            <person name="Dash D."/>
            <person name="Pandey A."/>
        </authorList>
    </citation>
    <scope>IDENTIFICATION BY MASS SPECTROMETRY [LARGE SCALE ANALYSIS]</scope>
    <source>
        <strain>ATCC 25618 / H37Rv</strain>
    </source>
</reference>
<dbReference type="EMBL" id="AL123456">
    <property type="protein sequence ID" value="CCP46087.1"/>
    <property type="status" value="ALT_INIT"/>
    <property type="molecule type" value="Genomic_DNA"/>
</dbReference>
<dbReference type="RefSeq" id="NP_217785.3">
    <property type="nucleotide sequence ID" value="NC_000962.3"/>
</dbReference>
<dbReference type="RefSeq" id="WP_003417112.1">
    <property type="nucleotide sequence ID" value="NC_000962.3"/>
</dbReference>
<dbReference type="SMR" id="P96873"/>
<dbReference type="STRING" id="83332.Rv3268"/>
<dbReference type="PaxDb" id="83332-Rv3268"/>
<dbReference type="PRIDE" id="P96873"/>
<dbReference type="DNASU" id="888703"/>
<dbReference type="GeneID" id="888703"/>
<dbReference type="KEGG" id="mtu:Rv3268"/>
<dbReference type="PATRIC" id="fig|83332.111.peg.3650"/>
<dbReference type="TubercuList" id="Rv3268"/>
<dbReference type="eggNOG" id="COG0318">
    <property type="taxonomic scope" value="Bacteria"/>
</dbReference>
<dbReference type="InParanoid" id="P96873"/>
<dbReference type="OrthoDB" id="3396763at2"/>
<dbReference type="PhylomeDB" id="P96873"/>
<dbReference type="Proteomes" id="UP000001584">
    <property type="component" value="Chromosome"/>
</dbReference>
<dbReference type="Gene3D" id="3.40.50.12780">
    <property type="entry name" value="N-terminal domain of ligase-like"/>
    <property type="match status" value="1"/>
</dbReference>
<dbReference type="InterPro" id="IPR042099">
    <property type="entry name" value="ANL_N_sf"/>
</dbReference>
<dbReference type="InterPro" id="IPR017523">
    <property type="entry name" value="Rv3268"/>
</dbReference>
<dbReference type="NCBIfam" id="TIGR03089">
    <property type="entry name" value="TIGR03089 family protein"/>
    <property type="match status" value="1"/>
</dbReference>
<dbReference type="SUPFAM" id="SSF56801">
    <property type="entry name" value="Acetyl-CoA synthetase-like"/>
    <property type="match status" value="1"/>
</dbReference>
<gene>
    <name evidence="3" type="ordered locus">Rv3268</name>
</gene>
<keyword id="KW-0903">Direct protein sequencing</keyword>
<keyword id="KW-1185">Reference proteome</keyword>
<accession>P96873</accession>
<accession>F2GKU1</accession>
<accession>I6XGR6</accession>
<accession>Q7D5S9</accession>
<sequence>MTTPTTLSGAILDPMLRADPVGPRITYYDDATGERIELSAVTLANWAAKTGNLLRDELAAGPASRVAILLPAHWQTAAVLFGVWWIGAQAILDDSPADVALCTADRLAEADAVVNSAAVAGEVAVLSLDPFGRPATGLPVGVTDYATAVRVHGDQIVPEHNPGPVLAGRSVEQILRDCAASAAARGLTAADRVLSTASWAGPDELVDGLLAILAAGASLVQVANPDPAMLQRRIATEKVTRVL</sequence>
<protein>
    <recommendedName>
        <fullName evidence="2">TIGR03089 family protein</fullName>
    </recommendedName>
</protein>
<name>Y3268_MYCTU</name>
<proteinExistence type="evidence at protein level"/>